<feature type="chain" id="PRO_0000225571" description="DNA-directed RNA polymerase subunit beta'">
    <location>
        <begin position="1"/>
        <end position="1415"/>
    </location>
</feature>
<feature type="binding site" evidence="1">
    <location>
        <position position="72"/>
    </location>
    <ligand>
        <name>Zn(2+)</name>
        <dbReference type="ChEBI" id="CHEBI:29105"/>
        <label>1</label>
    </ligand>
</feature>
<feature type="binding site" evidence="1">
    <location>
        <position position="74"/>
    </location>
    <ligand>
        <name>Zn(2+)</name>
        <dbReference type="ChEBI" id="CHEBI:29105"/>
        <label>1</label>
    </ligand>
</feature>
<feature type="binding site" evidence="1">
    <location>
        <position position="87"/>
    </location>
    <ligand>
        <name>Zn(2+)</name>
        <dbReference type="ChEBI" id="CHEBI:29105"/>
        <label>1</label>
    </ligand>
</feature>
<feature type="binding site" evidence="1">
    <location>
        <position position="90"/>
    </location>
    <ligand>
        <name>Zn(2+)</name>
        <dbReference type="ChEBI" id="CHEBI:29105"/>
        <label>1</label>
    </ligand>
</feature>
<feature type="binding site" evidence="1">
    <location>
        <position position="463"/>
    </location>
    <ligand>
        <name>Mg(2+)</name>
        <dbReference type="ChEBI" id="CHEBI:18420"/>
    </ligand>
</feature>
<feature type="binding site" evidence="1">
    <location>
        <position position="465"/>
    </location>
    <ligand>
        <name>Mg(2+)</name>
        <dbReference type="ChEBI" id="CHEBI:18420"/>
    </ligand>
</feature>
<feature type="binding site" evidence="1">
    <location>
        <position position="467"/>
    </location>
    <ligand>
        <name>Mg(2+)</name>
        <dbReference type="ChEBI" id="CHEBI:18420"/>
    </ligand>
</feature>
<feature type="binding site" evidence="1">
    <location>
        <position position="811"/>
    </location>
    <ligand>
        <name>Zn(2+)</name>
        <dbReference type="ChEBI" id="CHEBI:29105"/>
        <label>2</label>
    </ligand>
</feature>
<feature type="binding site" evidence="1">
    <location>
        <position position="885"/>
    </location>
    <ligand>
        <name>Zn(2+)</name>
        <dbReference type="ChEBI" id="CHEBI:29105"/>
        <label>2</label>
    </ligand>
</feature>
<feature type="binding site" evidence="1">
    <location>
        <position position="892"/>
    </location>
    <ligand>
        <name>Zn(2+)</name>
        <dbReference type="ChEBI" id="CHEBI:29105"/>
        <label>2</label>
    </ligand>
</feature>
<feature type="binding site" evidence="1">
    <location>
        <position position="895"/>
    </location>
    <ligand>
        <name>Zn(2+)</name>
        <dbReference type="ChEBI" id="CHEBI:29105"/>
        <label>2</label>
    </ligand>
</feature>
<comment type="function">
    <text evidence="1">DNA-dependent RNA polymerase catalyzes the transcription of DNA into RNA using the four ribonucleoside triphosphates as substrates.</text>
</comment>
<comment type="catalytic activity">
    <reaction evidence="1">
        <text>RNA(n) + a ribonucleoside 5'-triphosphate = RNA(n+1) + diphosphate</text>
        <dbReference type="Rhea" id="RHEA:21248"/>
        <dbReference type="Rhea" id="RHEA-COMP:14527"/>
        <dbReference type="Rhea" id="RHEA-COMP:17342"/>
        <dbReference type="ChEBI" id="CHEBI:33019"/>
        <dbReference type="ChEBI" id="CHEBI:61557"/>
        <dbReference type="ChEBI" id="CHEBI:140395"/>
        <dbReference type="EC" id="2.7.7.6"/>
    </reaction>
</comment>
<comment type="cofactor">
    <cofactor evidence="1">
        <name>Mg(2+)</name>
        <dbReference type="ChEBI" id="CHEBI:18420"/>
    </cofactor>
    <text evidence="1">Binds 1 Mg(2+) ion per subunit.</text>
</comment>
<comment type="cofactor">
    <cofactor evidence="1">
        <name>Zn(2+)</name>
        <dbReference type="ChEBI" id="CHEBI:29105"/>
    </cofactor>
    <text evidence="1">Binds 2 Zn(2+) ions per subunit.</text>
</comment>
<comment type="subunit">
    <text evidence="1">The RNAP catalytic core consists of 2 alpha, 1 beta, 1 beta' and 1 omega subunit. When a sigma factor is associated with the core the holoenzyme is formed, which can initiate transcription.</text>
</comment>
<comment type="similarity">
    <text evidence="1">Belongs to the RNA polymerase beta' chain family.</text>
</comment>
<keyword id="KW-0240">DNA-directed RNA polymerase</keyword>
<keyword id="KW-0460">Magnesium</keyword>
<keyword id="KW-0479">Metal-binding</keyword>
<keyword id="KW-0548">Nucleotidyltransferase</keyword>
<keyword id="KW-1185">Reference proteome</keyword>
<keyword id="KW-0804">Transcription</keyword>
<keyword id="KW-0808">Transferase</keyword>
<keyword id="KW-0862">Zinc</keyword>
<name>RPOC_CERS4</name>
<evidence type="ECO:0000255" key="1">
    <source>
        <dbReference type="HAMAP-Rule" id="MF_01322"/>
    </source>
</evidence>
<dbReference type="EC" id="2.7.7.6" evidence="1"/>
<dbReference type="EMBL" id="CP000143">
    <property type="protein sequence ID" value="ABA77855.1"/>
    <property type="molecule type" value="Genomic_DNA"/>
</dbReference>
<dbReference type="RefSeq" id="WP_011336949.1">
    <property type="nucleotide sequence ID" value="NC_007493.2"/>
</dbReference>
<dbReference type="RefSeq" id="YP_351756.1">
    <property type="nucleotide sequence ID" value="NC_007493.2"/>
</dbReference>
<dbReference type="SMR" id="Q3J5S9"/>
<dbReference type="STRING" id="272943.RSP_1712"/>
<dbReference type="EnsemblBacteria" id="ABA77855">
    <property type="protein sequence ID" value="ABA77855"/>
    <property type="gene ID" value="RSP_1712"/>
</dbReference>
<dbReference type="GeneID" id="3718914"/>
<dbReference type="KEGG" id="rsp:RSP_1712"/>
<dbReference type="PATRIC" id="fig|272943.9.peg.585"/>
<dbReference type="eggNOG" id="COG0086">
    <property type="taxonomic scope" value="Bacteria"/>
</dbReference>
<dbReference type="OrthoDB" id="9815296at2"/>
<dbReference type="PhylomeDB" id="Q3J5S9"/>
<dbReference type="Proteomes" id="UP000002703">
    <property type="component" value="Chromosome 1"/>
</dbReference>
<dbReference type="GO" id="GO:0000428">
    <property type="term" value="C:DNA-directed RNA polymerase complex"/>
    <property type="evidence" value="ECO:0007669"/>
    <property type="project" value="UniProtKB-KW"/>
</dbReference>
<dbReference type="GO" id="GO:0003677">
    <property type="term" value="F:DNA binding"/>
    <property type="evidence" value="ECO:0007669"/>
    <property type="project" value="UniProtKB-UniRule"/>
</dbReference>
<dbReference type="GO" id="GO:0003899">
    <property type="term" value="F:DNA-directed RNA polymerase activity"/>
    <property type="evidence" value="ECO:0007669"/>
    <property type="project" value="UniProtKB-UniRule"/>
</dbReference>
<dbReference type="GO" id="GO:0000287">
    <property type="term" value="F:magnesium ion binding"/>
    <property type="evidence" value="ECO:0007669"/>
    <property type="project" value="UniProtKB-UniRule"/>
</dbReference>
<dbReference type="GO" id="GO:0008270">
    <property type="term" value="F:zinc ion binding"/>
    <property type="evidence" value="ECO:0007669"/>
    <property type="project" value="UniProtKB-UniRule"/>
</dbReference>
<dbReference type="GO" id="GO:0006351">
    <property type="term" value="P:DNA-templated transcription"/>
    <property type="evidence" value="ECO:0007669"/>
    <property type="project" value="UniProtKB-UniRule"/>
</dbReference>
<dbReference type="CDD" id="cd02655">
    <property type="entry name" value="RNAP_beta'_C"/>
    <property type="match status" value="1"/>
</dbReference>
<dbReference type="CDD" id="cd01609">
    <property type="entry name" value="RNAP_beta'_N"/>
    <property type="match status" value="1"/>
</dbReference>
<dbReference type="FunFam" id="4.10.860.120:FF:000001">
    <property type="entry name" value="DNA-directed RNA polymerase subunit beta"/>
    <property type="match status" value="1"/>
</dbReference>
<dbReference type="Gene3D" id="1.10.132.30">
    <property type="match status" value="1"/>
</dbReference>
<dbReference type="Gene3D" id="1.10.150.390">
    <property type="match status" value="1"/>
</dbReference>
<dbReference type="Gene3D" id="1.10.1790.20">
    <property type="match status" value="1"/>
</dbReference>
<dbReference type="Gene3D" id="1.10.40.90">
    <property type="match status" value="1"/>
</dbReference>
<dbReference type="Gene3D" id="2.40.40.20">
    <property type="match status" value="1"/>
</dbReference>
<dbReference type="Gene3D" id="2.40.50.100">
    <property type="match status" value="3"/>
</dbReference>
<dbReference type="Gene3D" id="4.10.860.120">
    <property type="entry name" value="RNA polymerase II, clamp domain"/>
    <property type="match status" value="1"/>
</dbReference>
<dbReference type="Gene3D" id="1.10.274.100">
    <property type="entry name" value="RNA polymerase Rpb1, domain 3"/>
    <property type="match status" value="2"/>
</dbReference>
<dbReference type="HAMAP" id="MF_01322">
    <property type="entry name" value="RNApol_bact_RpoC"/>
    <property type="match status" value="1"/>
</dbReference>
<dbReference type="InterPro" id="IPR045867">
    <property type="entry name" value="DNA-dir_RpoC_beta_prime"/>
</dbReference>
<dbReference type="InterPro" id="IPR012754">
    <property type="entry name" value="DNA-dir_RpoC_beta_prime_bact"/>
</dbReference>
<dbReference type="InterPro" id="IPR000722">
    <property type="entry name" value="RNA_pol_asu"/>
</dbReference>
<dbReference type="InterPro" id="IPR006592">
    <property type="entry name" value="RNA_pol_N"/>
</dbReference>
<dbReference type="InterPro" id="IPR007080">
    <property type="entry name" value="RNA_pol_Rpb1_1"/>
</dbReference>
<dbReference type="InterPro" id="IPR007066">
    <property type="entry name" value="RNA_pol_Rpb1_3"/>
</dbReference>
<dbReference type="InterPro" id="IPR042102">
    <property type="entry name" value="RNA_pol_Rpb1_3_sf"/>
</dbReference>
<dbReference type="InterPro" id="IPR007083">
    <property type="entry name" value="RNA_pol_Rpb1_4"/>
</dbReference>
<dbReference type="InterPro" id="IPR007081">
    <property type="entry name" value="RNA_pol_Rpb1_5"/>
</dbReference>
<dbReference type="InterPro" id="IPR044893">
    <property type="entry name" value="RNA_pol_Rpb1_clamp_domain"/>
</dbReference>
<dbReference type="InterPro" id="IPR038120">
    <property type="entry name" value="Rpb1_funnel_sf"/>
</dbReference>
<dbReference type="NCBIfam" id="TIGR02386">
    <property type="entry name" value="rpoC_TIGR"/>
    <property type="match status" value="1"/>
</dbReference>
<dbReference type="PANTHER" id="PTHR19376">
    <property type="entry name" value="DNA-DIRECTED RNA POLYMERASE"/>
    <property type="match status" value="1"/>
</dbReference>
<dbReference type="PANTHER" id="PTHR19376:SF54">
    <property type="entry name" value="DNA-DIRECTED RNA POLYMERASE SUBUNIT BETA"/>
    <property type="match status" value="1"/>
</dbReference>
<dbReference type="Pfam" id="PF04997">
    <property type="entry name" value="RNA_pol_Rpb1_1"/>
    <property type="match status" value="1"/>
</dbReference>
<dbReference type="Pfam" id="PF00623">
    <property type="entry name" value="RNA_pol_Rpb1_2"/>
    <property type="match status" value="2"/>
</dbReference>
<dbReference type="Pfam" id="PF04983">
    <property type="entry name" value="RNA_pol_Rpb1_3"/>
    <property type="match status" value="1"/>
</dbReference>
<dbReference type="Pfam" id="PF05000">
    <property type="entry name" value="RNA_pol_Rpb1_4"/>
    <property type="match status" value="1"/>
</dbReference>
<dbReference type="Pfam" id="PF04998">
    <property type="entry name" value="RNA_pol_Rpb1_5"/>
    <property type="match status" value="1"/>
</dbReference>
<dbReference type="SMART" id="SM00663">
    <property type="entry name" value="RPOLA_N"/>
    <property type="match status" value="1"/>
</dbReference>
<dbReference type="SUPFAM" id="SSF64484">
    <property type="entry name" value="beta and beta-prime subunits of DNA dependent RNA-polymerase"/>
    <property type="match status" value="1"/>
</dbReference>
<reference key="1">
    <citation type="submission" date="2005-09" db="EMBL/GenBank/DDBJ databases">
        <title>Complete sequence of chromosome 1 of Rhodobacter sphaeroides 2.4.1.</title>
        <authorList>
            <person name="Copeland A."/>
            <person name="Lucas S."/>
            <person name="Lapidus A."/>
            <person name="Barry K."/>
            <person name="Detter J.C."/>
            <person name="Glavina T."/>
            <person name="Hammon N."/>
            <person name="Israni S."/>
            <person name="Pitluck S."/>
            <person name="Richardson P."/>
            <person name="Mackenzie C."/>
            <person name="Choudhary M."/>
            <person name="Larimer F."/>
            <person name="Hauser L.J."/>
            <person name="Land M."/>
            <person name="Donohue T.J."/>
            <person name="Kaplan S."/>
        </authorList>
    </citation>
    <scope>NUCLEOTIDE SEQUENCE [LARGE SCALE GENOMIC DNA]</scope>
    <source>
        <strain>ATCC 17023 / DSM 158 / JCM 6121 / CCUG 31486 / LMG 2827 / NBRC 12203 / NCIMB 8253 / ATH 2.4.1.</strain>
    </source>
</reference>
<organism>
    <name type="scientific">Cereibacter sphaeroides (strain ATCC 17023 / DSM 158 / JCM 6121 / CCUG 31486 / LMG 2827 / NBRC 12203 / NCIMB 8253 / ATH 2.4.1.)</name>
    <name type="common">Rhodobacter sphaeroides</name>
    <dbReference type="NCBI Taxonomy" id="272943"/>
    <lineage>
        <taxon>Bacteria</taxon>
        <taxon>Pseudomonadati</taxon>
        <taxon>Pseudomonadota</taxon>
        <taxon>Alphaproteobacteria</taxon>
        <taxon>Rhodobacterales</taxon>
        <taxon>Paracoccaceae</taxon>
        <taxon>Cereibacter</taxon>
    </lineage>
</organism>
<accession>Q3J5S9</accession>
<proteinExistence type="inferred from homology"/>
<sequence length="1415" mass="157272">MNQELSTNPFNPVAPVKTFDEIKISLASPERILSWSYGEIKKPETINYRTFKPERDGLFCARIFGPIKDYECLCGKYKRMKYRGVVCEKCGVEVTLQKVRRERMGHIELAAPVAHIWFLKSLPSRIGLMLDMTLRDLERILYFENYVVIEPGLTDLTYGQLMTEEEFLDAQDQYGADAFTANIGAEAIREMLSAIDLEQTAETLREELKEATGELKPKKIIKRLKIVESFLESGNRPEWMILTVLPVIPPELRPLVPLDGGRFATSDLNDLYRRVINRNNRLKRLIELRAPDIIVRNEKRMLQEAVDALFDNGRRGRVITGTNKRPLKSLSDMLKGKQGRFRQNLLGKRVDFSGRSVIVTGPELKLHQCGLPKKMALELFKPFIYSRLEAKGLSSTVKQAKKLVEKERPEVWDILDEVIREHPVLLNRAPTLHRLGIQAFEPILIEGKAIQLHPLVCSAFNADFDGDQMAVHVPLSLEAQLEARVLMMSTNNVLSPANGAPIIVPSQDMVLGLYYTTMERRGMKGEGMAFSSVEEVEHALAAGEVHLHATITARIKQIDEEGNEVVKRYQTTPGRLRLGNLLPLNAKAPFELVNRLLRKKDVQNVIDTVYRYCGQKESVIFCDQIMGMGFREAFKAGISFGKDDMLIPDTKWPIVNEVRDQVKEFEQQYMDGLITQGEKYNKVVDAWSKCSDKVAGEMMAEISAVRYDDAGAEKEPNSVYMMSHSGARGSPAQMKQLGGMRGLMAKPNGEIIETPIISNFKEGLTVLEYFNSTHGARKGLADTALKTANSGYLTRRLVDVAQDCIVRTHDCGTENAITASAAVNEGEVVSPLAERVLGRVAAEDILVPGSDEVIVARGELIDERRADLVDQANVASVRIRSPLTCEAEEGVCAMCYGRDLARGTLVNIGEAVGIIAAQSIGEPGTQLTMRTFHIGGIAQGGQQSFLEASQEGRIEFRNPNLLENANGEQIVMGRNMQLAIIDEAGQERATHKLTYGAKVHVKDGQTVKRATRLFEWDPYTLPIIAEKAGVARFVDLVSGISVREDTDEATGMTQKIVSDWRSTPKGGDLKPEIIIMNPETGDPMRNEAGNPISYPMSVEAILSVEDGQTVRAGDVVARIPREGARTKDITGGLPRVAELFEARRPKDHAIIAENDGYVRFGKDYKNKRRITIEPVDDTLNSVEYMVPKGKHIPVQEGDFVQKGDYIMDGNPAPHDILRILGVEALANYMIDEVQEVYRLQGVKINDKHIEVIVRQMLQKYEILDSGETTLLKGEHVDKAELDEVNQKAMDHGMRPAHAEPILLGITKASLQTRSFISAASFQETTRVLTEASVQGKRDKLVGLKENVIVGRLIPAGTGGATSRVKKIAHDRDQKVIDTRRAEAESAAALAAPTDGVIDLGSEDSGLVETVENREE</sequence>
<gene>
    <name evidence="1" type="primary">rpoC</name>
    <name type="ordered locus">RHOS4_02870</name>
    <name type="ordered locus">RSP_1712</name>
</gene>
<protein>
    <recommendedName>
        <fullName evidence="1">DNA-directed RNA polymerase subunit beta'</fullName>
        <shortName evidence="1">RNAP subunit beta'</shortName>
        <ecNumber evidence="1">2.7.7.6</ecNumber>
    </recommendedName>
    <alternativeName>
        <fullName evidence="1">RNA polymerase subunit beta'</fullName>
    </alternativeName>
    <alternativeName>
        <fullName evidence="1">Transcriptase subunit beta'</fullName>
    </alternativeName>
</protein>